<protein>
    <recommendedName>
        <fullName evidence="1">Orotate phosphoribosyltransferase</fullName>
        <shortName evidence="1">OPRT</shortName>
        <shortName evidence="1">OPRTase</shortName>
        <ecNumber evidence="1">2.4.2.10</ecNumber>
    </recommendedName>
</protein>
<comment type="function">
    <text evidence="1">Catalyzes the transfer of a ribosyl phosphate group from 5-phosphoribose 1-diphosphate to orotate, leading to the formation of orotidine monophosphate (OMP).</text>
</comment>
<comment type="catalytic activity">
    <reaction evidence="1">
        <text>orotidine 5'-phosphate + diphosphate = orotate + 5-phospho-alpha-D-ribose 1-diphosphate</text>
        <dbReference type="Rhea" id="RHEA:10380"/>
        <dbReference type="ChEBI" id="CHEBI:30839"/>
        <dbReference type="ChEBI" id="CHEBI:33019"/>
        <dbReference type="ChEBI" id="CHEBI:57538"/>
        <dbReference type="ChEBI" id="CHEBI:58017"/>
        <dbReference type="EC" id="2.4.2.10"/>
    </reaction>
</comment>
<comment type="cofactor">
    <cofactor evidence="1">
        <name>Mg(2+)</name>
        <dbReference type="ChEBI" id="CHEBI:18420"/>
    </cofactor>
</comment>
<comment type="pathway">
    <text evidence="1">Pyrimidine metabolism; UMP biosynthesis via de novo pathway; UMP from orotate: step 1/2.</text>
</comment>
<comment type="subunit">
    <text evidence="1">Homodimer.</text>
</comment>
<comment type="similarity">
    <text evidence="1">Belongs to the purine/pyrimidine phosphoribosyltransferase family. PyrE subfamily.</text>
</comment>
<dbReference type="EC" id="2.4.2.10" evidence="1"/>
<dbReference type="EMBL" id="AE008922">
    <property type="protein sequence ID" value="AAM43078.1"/>
    <property type="molecule type" value="Genomic_DNA"/>
</dbReference>
<dbReference type="RefSeq" id="NP_639187.1">
    <property type="nucleotide sequence ID" value="NC_003902.1"/>
</dbReference>
<dbReference type="RefSeq" id="WP_011038922.1">
    <property type="nucleotide sequence ID" value="NC_003902.1"/>
</dbReference>
<dbReference type="SMR" id="Q8P469"/>
<dbReference type="STRING" id="190485.XCC3847"/>
<dbReference type="EnsemblBacteria" id="AAM43078">
    <property type="protein sequence ID" value="AAM43078"/>
    <property type="gene ID" value="XCC3847"/>
</dbReference>
<dbReference type="KEGG" id="xcc:XCC3847"/>
<dbReference type="PATRIC" id="fig|190485.4.peg.4115"/>
<dbReference type="eggNOG" id="COG0461">
    <property type="taxonomic scope" value="Bacteria"/>
</dbReference>
<dbReference type="HOGENOM" id="CLU_074878_0_1_6"/>
<dbReference type="OrthoDB" id="9779060at2"/>
<dbReference type="UniPathway" id="UPA00070">
    <property type="reaction ID" value="UER00119"/>
</dbReference>
<dbReference type="Proteomes" id="UP000001010">
    <property type="component" value="Chromosome"/>
</dbReference>
<dbReference type="GO" id="GO:0005737">
    <property type="term" value="C:cytoplasm"/>
    <property type="evidence" value="ECO:0000318"/>
    <property type="project" value="GO_Central"/>
</dbReference>
<dbReference type="GO" id="GO:0000287">
    <property type="term" value="F:magnesium ion binding"/>
    <property type="evidence" value="ECO:0007669"/>
    <property type="project" value="UniProtKB-UniRule"/>
</dbReference>
<dbReference type="GO" id="GO:0004588">
    <property type="term" value="F:orotate phosphoribosyltransferase activity"/>
    <property type="evidence" value="ECO:0000318"/>
    <property type="project" value="GO_Central"/>
</dbReference>
<dbReference type="GO" id="GO:0006207">
    <property type="term" value="P:'de novo' pyrimidine nucleobase biosynthetic process"/>
    <property type="evidence" value="ECO:0000318"/>
    <property type="project" value="GO_Central"/>
</dbReference>
<dbReference type="GO" id="GO:0044205">
    <property type="term" value="P:'de novo' UMP biosynthetic process"/>
    <property type="evidence" value="ECO:0007669"/>
    <property type="project" value="UniProtKB-UniRule"/>
</dbReference>
<dbReference type="GO" id="GO:0006221">
    <property type="term" value="P:pyrimidine nucleotide biosynthetic process"/>
    <property type="evidence" value="ECO:0000318"/>
    <property type="project" value="GO_Central"/>
</dbReference>
<dbReference type="GO" id="GO:0046132">
    <property type="term" value="P:pyrimidine ribonucleoside biosynthetic process"/>
    <property type="evidence" value="ECO:0000318"/>
    <property type="project" value="GO_Central"/>
</dbReference>
<dbReference type="CDD" id="cd06223">
    <property type="entry name" value="PRTases_typeI"/>
    <property type="match status" value="1"/>
</dbReference>
<dbReference type="FunFam" id="3.40.50.2020:FF:000052">
    <property type="entry name" value="Orotate phosphoribosyltransferase"/>
    <property type="match status" value="1"/>
</dbReference>
<dbReference type="Gene3D" id="3.40.50.2020">
    <property type="match status" value="1"/>
</dbReference>
<dbReference type="HAMAP" id="MF_01208">
    <property type="entry name" value="PyrE"/>
    <property type="match status" value="1"/>
</dbReference>
<dbReference type="InterPro" id="IPR023031">
    <property type="entry name" value="OPRT"/>
</dbReference>
<dbReference type="InterPro" id="IPR004467">
    <property type="entry name" value="Or_phspho_trans_dom"/>
</dbReference>
<dbReference type="InterPro" id="IPR000836">
    <property type="entry name" value="PRibTrfase_dom"/>
</dbReference>
<dbReference type="InterPro" id="IPR029057">
    <property type="entry name" value="PRTase-like"/>
</dbReference>
<dbReference type="NCBIfam" id="TIGR00336">
    <property type="entry name" value="pyrE"/>
    <property type="match status" value="1"/>
</dbReference>
<dbReference type="PANTHER" id="PTHR46683">
    <property type="entry name" value="OROTATE PHOSPHORIBOSYLTRANSFERASE 1-RELATED"/>
    <property type="match status" value="1"/>
</dbReference>
<dbReference type="PANTHER" id="PTHR46683:SF1">
    <property type="entry name" value="OROTATE PHOSPHORIBOSYLTRANSFERASE 1-RELATED"/>
    <property type="match status" value="1"/>
</dbReference>
<dbReference type="Pfam" id="PF00156">
    <property type="entry name" value="Pribosyltran"/>
    <property type="match status" value="1"/>
</dbReference>
<dbReference type="SUPFAM" id="SSF53271">
    <property type="entry name" value="PRTase-like"/>
    <property type="match status" value="1"/>
</dbReference>
<dbReference type="PROSITE" id="PS00103">
    <property type="entry name" value="PUR_PYR_PR_TRANSFER"/>
    <property type="match status" value="1"/>
</dbReference>
<reference key="1">
    <citation type="journal article" date="2002" name="Nature">
        <title>Comparison of the genomes of two Xanthomonas pathogens with differing host specificities.</title>
        <authorList>
            <person name="da Silva A.C.R."/>
            <person name="Ferro J.A."/>
            <person name="Reinach F.C."/>
            <person name="Farah C.S."/>
            <person name="Furlan L.R."/>
            <person name="Quaggio R.B."/>
            <person name="Monteiro-Vitorello C.B."/>
            <person name="Van Sluys M.A."/>
            <person name="Almeida N.F. Jr."/>
            <person name="Alves L.M.C."/>
            <person name="do Amaral A.M."/>
            <person name="Bertolini M.C."/>
            <person name="Camargo L.E.A."/>
            <person name="Camarotte G."/>
            <person name="Cannavan F."/>
            <person name="Cardozo J."/>
            <person name="Chambergo F."/>
            <person name="Ciapina L.P."/>
            <person name="Cicarelli R.M.B."/>
            <person name="Coutinho L.L."/>
            <person name="Cursino-Santos J.R."/>
            <person name="El-Dorry H."/>
            <person name="Faria J.B."/>
            <person name="Ferreira A.J.S."/>
            <person name="Ferreira R.C.C."/>
            <person name="Ferro M.I.T."/>
            <person name="Formighieri E.F."/>
            <person name="Franco M.C."/>
            <person name="Greggio C.C."/>
            <person name="Gruber A."/>
            <person name="Katsuyama A.M."/>
            <person name="Kishi L.T."/>
            <person name="Leite R.P."/>
            <person name="Lemos E.G.M."/>
            <person name="Lemos M.V.F."/>
            <person name="Locali E.C."/>
            <person name="Machado M.A."/>
            <person name="Madeira A.M.B.N."/>
            <person name="Martinez-Rossi N.M."/>
            <person name="Martins E.C."/>
            <person name="Meidanis J."/>
            <person name="Menck C.F.M."/>
            <person name="Miyaki C.Y."/>
            <person name="Moon D.H."/>
            <person name="Moreira L.M."/>
            <person name="Novo M.T.M."/>
            <person name="Okura V.K."/>
            <person name="Oliveira M.C."/>
            <person name="Oliveira V.R."/>
            <person name="Pereira H.A."/>
            <person name="Rossi A."/>
            <person name="Sena J.A.D."/>
            <person name="Silva C."/>
            <person name="de Souza R.F."/>
            <person name="Spinola L.A.F."/>
            <person name="Takita M.A."/>
            <person name="Tamura R.E."/>
            <person name="Teixeira E.C."/>
            <person name="Tezza R.I.D."/>
            <person name="Trindade dos Santos M."/>
            <person name="Truffi D."/>
            <person name="Tsai S.M."/>
            <person name="White F.F."/>
            <person name="Setubal J.C."/>
            <person name="Kitajima J.P."/>
        </authorList>
    </citation>
    <scope>NUCLEOTIDE SEQUENCE [LARGE SCALE GENOMIC DNA]</scope>
    <source>
        <strain>ATCC 33913 / DSM 3586 / NCPPB 528 / LMG 568 / P 25</strain>
    </source>
</reference>
<sequence length="219" mass="22927">MTDHRTRFLQLALDADALRFGEFTLKSGRLSPYFFNAGRFDSGAKTAQLAQCYADAIDAAGVEFDLLFGPAYKGIPLATALACAYAGRGRDLPLAFNRKEAKDHGEGGTLIGAPLQGRKVLIVDDVITAGTAIREALGIIRAAGGTPSGIVVALDRQEIASEQDRRSAAQAVAAEAGIPVIAVANLADLLAFAAGNADLVGFREPLLAYRGRYGTDTTG</sequence>
<feature type="chain" id="PRO_0000110771" description="Orotate phosphoribosyltransferase">
    <location>
        <begin position="1"/>
        <end position="219"/>
    </location>
</feature>
<feature type="binding site" description="in other chain" evidence="1">
    <location>
        <position position="26"/>
    </location>
    <ligand>
        <name>5-phospho-alpha-D-ribose 1-diphosphate</name>
        <dbReference type="ChEBI" id="CHEBI:58017"/>
        <note>ligand shared between dimeric partners</note>
    </ligand>
</feature>
<feature type="binding site" evidence="1">
    <location>
        <begin position="34"/>
        <end position="35"/>
    </location>
    <ligand>
        <name>orotate</name>
        <dbReference type="ChEBI" id="CHEBI:30839"/>
    </ligand>
</feature>
<feature type="binding site" description="in other chain" evidence="1">
    <location>
        <begin position="72"/>
        <end position="73"/>
    </location>
    <ligand>
        <name>5-phospho-alpha-D-ribose 1-diphosphate</name>
        <dbReference type="ChEBI" id="CHEBI:58017"/>
        <note>ligand shared between dimeric partners</note>
    </ligand>
</feature>
<feature type="binding site" evidence="1">
    <location>
        <position position="98"/>
    </location>
    <ligand>
        <name>5-phospho-alpha-D-ribose 1-diphosphate</name>
        <dbReference type="ChEBI" id="CHEBI:58017"/>
        <note>ligand shared between dimeric partners</note>
    </ligand>
</feature>
<feature type="binding site" description="in other chain" evidence="1">
    <location>
        <position position="99"/>
    </location>
    <ligand>
        <name>5-phospho-alpha-D-ribose 1-diphosphate</name>
        <dbReference type="ChEBI" id="CHEBI:58017"/>
        <note>ligand shared between dimeric partners</note>
    </ligand>
</feature>
<feature type="binding site" evidence="1">
    <location>
        <position position="102"/>
    </location>
    <ligand>
        <name>5-phospho-alpha-D-ribose 1-diphosphate</name>
        <dbReference type="ChEBI" id="CHEBI:58017"/>
        <note>ligand shared between dimeric partners</note>
    </ligand>
</feature>
<feature type="binding site" evidence="1">
    <location>
        <position position="104"/>
    </location>
    <ligand>
        <name>5-phospho-alpha-D-ribose 1-diphosphate</name>
        <dbReference type="ChEBI" id="CHEBI:58017"/>
        <note>ligand shared between dimeric partners</note>
    </ligand>
</feature>
<feature type="binding site" description="in other chain" evidence="1">
    <location>
        <begin position="124"/>
        <end position="132"/>
    </location>
    <ligand>
        <name>5-phospho-alpha-D-ribose 1-diphosphate</name>
        <dbReference type="ChEBI" id="CHEBI:58017"/>
        <note>ligand shared between dimeric partners</note>
    </ligand>
</feature>
<feature type="binding site" evidence="1">
    <location>
        <position position="128"/>
    </location>
    <ligand>
        <name>orotate</name>
        <dbReference type="ChEBI" id="CHEBI:30839"/>
    </ligand>
</feature>
<feature type="binding site" evidence="1">
    <location>
        <position position="156"/>
    </location>
    <ligand>
        <name>orotate</name>
        <dbReference type="ChEBI" id="CHEBI:30839"/>
    </ligand>
</feature>
<gene>
    <name evidence="1" type="primary">pyrE</name>
    <name type="ordered locus">XCC3847</name>
</gene>
<proteinExistence type="inferred from homology"/>
<evidence type="ECO:0000255" key="1">
    <source>
        <dbReference type="HAMAP-Rule" id="MF_01208"/>
    </source>
</evidence>
<name>PYRE_XANCP</name>
<keyword id="KW-0328">Glycosyltransferase</keyword>
<keyword id="KW-0460">Magnesium</keyword>
<keyword id="KW-0665">Pyrimidine biosynthesis</keyword>
<keyword id="KW-1185">Reference proteome</keyword>
<keyword id="KW-0808">Transferase</keyword>
<organism>
    <name type="scientific">Xanthomonas campestris pv. campestris (strain ATCC 33913 / DSM 3586 / NCPPB 528 / LMG 568 / P 25)</name>
    <dbReference type="NCBI Taxonomy" id="190485"/>
    <lineage>
        <taxon>Bacteria</taxon>
        <taxon>Pseudomonadati</taxon>
        <taxon>Pseudomonadota</taxon>
        <taxon>Gammaproteobacteria</taxon>
        <taxon>Lysobacterales</taxon>
        <taxon>Lysobacteraceae</taxon>
        <taxon>Xanthomonas</taxon>
    </lineage>
</organism>
<accession>Q8P469</accession>